<reference key="1">
    <citation type="journal article" date="2006" name="Proc. Natl. Acad. Sci. U.S.A.">
        <title>Genome reduction in Leptospira borgpetersenii reflects limited transmission potential.</title>
        <authorList>
            <person name="Bulach D.M."/>
            <person name="Zuerner R.L."/>
            <person name="Wilson P."/>
            <person name="Seemann T."/>
            <person name="McGrath A."/>
            <person name="Cullen P.A."/>
            <person name="Davis J."/>
            <person name="Johnson M."/>
            <person name="Kuczek E."/>
            <person name="Alt D.P."/>
            <person name="Peterson-Burch B."/>
            <person name="Coppel R.L."/>
            <person name="Rood J.I."/>
            <person name="Davies J.K."/>
            <person name="Adler B."/>
        </authorList>
    </citation>
    <scope>NUCLEOTIDE SEQUENCE [LARGE SCALE GENOMIC DNA]</scope>
    <source>
        <strain>L550</strain>
    </source>
</reference>
<sequence>MNILITNDDGIASSGIKALEAVLQKEHDTFLIAPLRERSATSMALSIYDSMRVERINDNHYIVDGYPADCVNIGLHGDIFPRIDLVLSGINRGVNMGHDIHYSGTVGAARHGAVHSRLSLAVSSGNITKDYDYIREAEFVRYFIDEYSSLLKVGVVYNMNIPFDFVSSMENLRITRLGKRTYEDTYSKKNIIGGIADFYLGGSKLEHATEEGTDFTAFFSGKISLTPLSLDQTDISLVQELSDTLSKSLS</sequence>
<comment type="function">
    <text evidence="1">Nucleotidase that shows phosphatase activity on nucleoside 5'-monophosphates.</text>
</comment>
<comment type="catalytic activity">
    <reaction evidence="1">
        <text>a ribonucleoside 5'-phosphate + H2O = a ribonucleoside + phosphate</text>
        <dbReference type="Rhea" id="RHEA:12484"/>
        <dbReference type="ChEBI" id="CHEBI:15377"/>
        <dbReference type="ChEBI" id="CHEBI:18254"/>
        <dbReference type="ChEBI" id="CHEBI:43474"/>
        <dbReference type="ChEBI" id="CHEBI:58043"/>
        <dbReference type="EC" id="3.1.3.5"/>
    </reaction>
</comment>
<comment type="cofactor">
    <cofactor evidence="1">
        <name>a divalent metal cation</name>
        <dbReference type="ChEBI" id="CHEBI:60240"/>
    </cofactor>
    <text evidence="1">Binds 1 divalent metal cation per subunit.</text>
</comment>
<comment type="subcellular location">
    <subcellularLocation>
        <location evidence="1">Cytoplasm</location>
    </subcellularLocation>
</comment>
<comment type="similarity">
    <text evidence="1">Belongs to the SurE nucleotidase family.</text>
</comment>
<dbReference type="EC" id="3.1.3.5" evidence="1"/>
<dbReference type="EMBL" id="CP000348">
    <property type="protein sequence ID" value="ABJ78191.1"/>
    <property type="molecule type" value="Genomic_DNA"/>
</dbReference>
<dbReference type="RefSeq" id="WP_011669537.1">
    <property type="nucleotide sequence ID" value="NC_008508.1"/>
</dbReference>
<dbReference type="SMR" id="Q054Q4"/>
<dbReference type="KEGG" id="lbl:LBL_0610"/>
<dbReference type="HOGENOM" id="CLU_045192_1_2_12"/>
<dbReference type="GO" id="GO:0005737">
    <property type="term" value="C:cytoplasm"/>
    <property type="evidence" value="ECO:0007669"/>
    <property type="project" value="UniProtKB-SubCell"/>
</dbReference>
<dbReference type="GO" id="GO:0008254">
    <property type="term" value="F:3'-nucleotidase activity"/>
    <property type="evidence" value="ECO:0007669"/>
    <property type="project" value="TreeGrafter"/>
</dbReference>
<dbReference type="GO" id="GO:0008253">
    <property type="term" value="F:5'-nucleotidase activity"/>
    <property type="evidence" value="ECO:0007669"/>
    <property type="project" value="UniProtKB-UniRule"/>
</dbReference>
<dbReference type="GO" id="GO:0004309">
    <property type="term" value="F:exopolyphosphatase activity"/>
    <property type="evidence" value="ECO:0007669"/>
    <property type="project" value="TreeGrafter"/>
</dbReference>
<dbReference type="GO" id="GO:0046872">
    <property type="term" value="F:metal ion binding"/>
    <property type="evidence" value="ECO:0007669"/>
    <property type="project" value="UniProtKB-UniRule"/>
</dbReference>
<dbReference type="GO" id="GO:0000166">
    <property type="term" value="F:nucleotide binding"/>
    <property type="evidence" value="ECO:0007669"/>
    <property type="project" value="UniProtKB-KW"/>
</dbReference>
<dbReference type="Gene3D" id="3.40.1210.10">
    <property type="entry name" value="Survival protein SurE-like phosphatase/nucleotidase"/>
    <property type="match status" value="1"/>
</dbReference>
<dbReference type="HAMAP" id="MF_00060">
    <property type="entry name" value="SurE"/>
    <property type="match status" value="1"/>
</dbReference>
<dbReference type="InterPro" id="IPR030048">
    <property type="entry name" value="SurE"/>
</dbReference>
<dbReference type="InterPro" id="IPR002828">
    <property type="entry name" value="SurE-like_Pase/nucleotidase"/>
</dbReference>
<dbReference type="InterPro" id="IPR036523">
    <property type="entry name" value="SurE-like_sf"/>
</dbReference>
<dbReference type="NCBIfam" id="TIGR00087">
    <property type="entry name" value="surE"/>
    <property type="match status" value="1"/>
</dbReference>
<dbReference type="PANTHER" id="PTHR30457">
    <property type="entry name" value="5'-NUCLEOTIDASE SURE"/>
    <property type="match status" value="1"/>
</dbReference>
<dbReference type="PANTHER" id="PTHR30457:SF12">
    <property type="entry name" value="5'_3'-NUCLEOTIDASE SURE"/>
    <property type="match status" value="1"/>
</dbReference>
<dbReference type="Pfam" id="PF01975">
    <property type="entry name" value="SurE"/>
    <property type="match status" value="1"/>
</dbReference>
<dbReference type="SUPFAM" id="SSF64167">
    <property type="entry name" value="SurE-like"/>
    <property type="match status" value="1"/>
</dbReference>
<accession>Q054Q4</accession>
<feature type="chain" id="PRO_1000007746" description="5'-nucleotidase SurE">
    <location>
        <begin position="1"/>
        <end position="250"/>
    </location>
</feature>
<feature type="binding site" evidence="1">
    <location>
        <position position="8"/>
    </location>
    <ligand>
        <name>a divalent metal cation</name>
        <dbReference type="ChEBI" id="CHEBI:60240"/>
    </ligand>
</feature>
<feature type="binding site" evidence="1">
    <location>
        <position position="9"/>
    </location>
    <ligand>
        <name>a divalent metal cation</name>
        <dbReference type="ChEBI" id="CHEBI:60240"/>
    </ligand>
</feature>
<feature type="binding site" evidence="1">
    <location>
        <position position="39"/>
    </location>
    <ligand>
        <name>a divalent metal cation</name>
        <dbReference type="ChEBI" id="CHEBI:60240"/>
    </ligand>
</feature>
<feature type="binding site" evidence="1">
    <location>
        <position position="91"/>
    </location>
    <ligand>
        <name>a divalent metal cation</name>
        <dbReference type="ChEBI" id="CHEBI:60240"/>
    </ligand>
</feature>
<evidence type="ECO:0000255" key="1">
    <source>
        <dbReference type="HAMAP-Rule" id="MF_00060"/>
    </source>
</evidence>
<protein>
    <recommendedName>
        <fullName evidence="1">5'-nucleotidase SurE</fullName>
        <ecNumber evidence="1">3.1.3.5</ecNumber>
    </recommendedName>
    <alternativeName>
        <fullName evidence="1">Nucleoside 5'-monophosphate phosphohydrolase</fullName>
    </alternativeName>
</protein>
<name>SURE_LEPBL</name>
<keyword id="KW-0963">Cytoplasm</keyword>
<keyword id="KW-0378">Hydrolase</keyword>
<keyword id="KW-0479">Metal-binding</keyword>
<keyword id="KW-0547">Nucleotide-binding</keyword>
<gene>
    <name evidence="1" type="primary">surE</name>
    <name type="ordered locus">LBL_0610</name>
</gene>
<organism>
    <name type="scientific">Leptospira borgpetersenii serovar Hardjo-bovis (strain L550)</name>
    <dbReference type="NCBI Taxonomy" id="355276"/>
    <lineage>
        <taxon>Bacteria</taxon>
        <taxon>Pseudomonadati</taxon>
        <taxon>Spirochaetota</taxon>
        <taxon>Spirochaetia</taxon>
        <taxon>Leptospirales</taxon>
        <taxon>Leptospiraceae</taxon>
        <taxon>Leptospira</taxon>
    </lineage>
</organism>
<proteinExistence type="inferred from homology"/>